<dbReference type="EMBL" id="CP000270">
    <property type="protein sequence ID" value="ABE29039.1"/>
    <property type="molecule type" value="Genomic_DNA"/>
</dbReference>
<dbReference type="RefSeq" id="WP_007179199.1">
    <property type="nucleotide sequence ID" value="NZ_CP008760.1"/>
</dbReference>
<dbReference type="SMR" id="Q145F0"/>
<dbReference type="STRING" id="266265.Bxe_A3960"/>
<dbReference type="KEGG" id="bxb:DR64_1636"/>
<dbReference type="KEGG" id="bxe:Bxe_A3960"/>
<dbReference type="eggNOG" id="COG0484">
    <property type="taxonomic scope" value="Bacteria"/>
</dbReference>
<dbReference type="OrthoDB" id="9779889at2"/>
<dbReference type="Proteomes" id="UP000001817">
    <property type="component" value="Chromosome 1"/>
</dbReference>
<dbReference type="GO" id="GO:0005737">
    <property type="term" value="C:cytoplasm"/>
    <property type="evidence" value="ECO:0007669"/>
    <property type="project" value="UniProtKB-SubCell"/>
</dbReference>
<dbReference type="GO" id="GO:0005524">
    <property type="term" value="F:ATP binding"/>
    <property type="evidence" value="ECO:0007669"/>
    <property type="project" value="InterPro"/>
</dbReference>
<dbReference type="GO" id="GO:0031072">
    <property type="term" value="F:heat shock protein binding"/>
    <property type="evidence" value="ECO:0007669"/>
    <property type="project" value="InterPro"/>
</dbReference>
<dbReference type="GO" id="GO:0051082">
    <property type="term" value="F:unfolded protein binding"/>
    <property type="evidence" value="ECO:0007669"/>
    <property type="project" value="UniProtKB-UniRule"/>
</dbReference>
<dbReference type="GO" id="GO:0008270">
    <property type="term" value="F:zinc ion binding"/>
    <property type="evidence" value="ECO:0007669"/>
    <property type="project" value="UniProtKB-UniRule"/>
</dbReference>
<dbReference type="GO" id="GO:0051085">
    <property type="term" value="P:chaperone cofactor-dependent protein refolding"/>
    <property type="evidence" value="ECO:0007669"/>
    <property type="project" value="TreeGrafter"/>
</dbReference>
<dbReference type="GO" id="GO:0006260">
    <property type="term" value="P:DNA replication"/>
    <property type="evidence" value="ECO:0007669"/>
    <property type="project" value="UniProtKB-KW"/>
</dbReference>
<dbReference type="GO" id="GO:0042026">
    <property type="term" value="P:protein refolding"/>
    <property type="evidence" value="ECO:0007669"/>
    <property type="project" value="TreeGrafter"/>
</dbReference>
<dbReference type="GO" id="GO:0009408">
    <property type="term" value="P:response to heat"/>
    <property type="evidence" value="ECO:0007669"/>
    <property type="project" value="InterPro"/>
</dbReference>
<dbReference type="CDD" id="cd06257">
    <property type="entry name" value="DnaJ"/>
    <property type="match status" value="1"/>
</dbReference>
<dbReference type="CDD" id="cd10747">
    <property type="entry name" value="DnaJ_C"/>
    <property type="match status" value="1"/>
</dbReference>
<dbReference type="CDD" id="cd10719">
    <property type="entry name" value="DnaJ_zf"/>
    <property type="match status" value="1"/>
</dbReference>
<dbReference type="FunFam" id="1.10.287.110:FF:000031">
    <property type="entry name" value="Molecular chaperone DnaJ"/>
    <property type="match status" value="1"/>
</dbReference>
<dbReference type="FunFam" id="2.10.230.10:FF:000002">
    <property type="entry name" value="Molecular chaperone DnaJ"/>
    <property type="match status" value="1"/>
</dbReference>
<dbReference type="FunFam" id="2.60.260.20:FF:000004">
    <property type="entry name" value="Molecular chaperone DnaJ"/>
    <property type="match status" value="1"/>
</dbReference>
<dbReference type="Gene3D" id="1.10.287.110">
    <property type="entry name" value="DnaJ domain"/>
    <property type="match status" value="1"/>
</dbReference>
<dbReference type="Gene3D" id="2.10.230.10">
    <property type="entry name" value="Heat shock protein DnaJ, cysteine-rich domain"/>
    <property type="match status" value="1"/>
</dbReference>
<dbReference type="Gene3D" id="2.60.260.20">
    <property type="entry name" value="Urease metallochaperone UreE, N-terminal domain"/>
    <property type="match status" value="2"/>
</dbReference>
<dbReference type="HAMAP" id="MF_01152">
    <property type="entry name" value="DnaJ"/>
    <property type="match status" value="1"/>
</dbReference>
<dbReference type="InterPro" id="IPR012724">
    <property type="entry name" value="DnaJ"/>
</dbReference>
<dbReference type="InterPro" id="IPR002939">
    <property type="entry name" value="DnaJ_C"/>
</dbReference>
<dbReference type="InterPro" id="IPR001623">
    <property type="entry name" value="DnaJ_domain"/>
</dbReference>
<dbReference type="InterPro" id="IPR018253">
    <property type="entry name" value="DnaJ_domain_CS"/>
</dbReference>
<dbReference type="InterPro" id="IPR008971">
    <property type="entry name" value="HSP40/DnaJ_pept-bd"/>
</dbReference>
<dbReference type="InterPro" id="IPR001305">
    <property type="entry name" value="HSP_DnaJ_Cys-rich_dom"/>
</dbReference>
<dbReference type="InterPro" id="IPR036410">
    <property type="entry name" value="HSP_DnaJ_Cys-rich_dom_sf"/>
</dbReference>
<dbReference type="InterPro" id="IPR036869">
    <property type="entry name" value="J_dom_sf"/>
</dbReference>
<dbReference type="NCBIfam" id="TIGR02349">
    <property type="entry name" value="DnaJ_bact"/>
    <property type="match status" value="1"/>
</dbReference>
<dbReference type="NCBIfam" id="NF008035">
    <property type="entry name" value="PRK10767.1"/>
    <property type="match status" value="1"/>
</dbReference>
<dbReference type="PANTHER" id="PTHR43096:SF48">
    <property type="entry name" value="CHAPERONE PROTEIN DNAJ"/>
    <property type="match status" value="1"/>
</dbReference>
<dbReference type="PANTHER" id="PTHR43096">
    <property type="entry name" value="DNAJ HOMOLOG 1, MITOCHONDRIAL-RELATED"/>
    <property type="match status" value="1"/>
</dbReference>
<dbReference type="Pfam" id="PF00226">
    <property type="entry name" value="DnaJ"/>
    <property type="match status" value="1"/>
</dbReference>
<dbReference type="Pfam" id="PF01556">
    <property type="entry name" value="DnaJ_C"/>
    <property type="match status" value="1"/>
</dbReference>
<dbReference type="Pfam" id="PF00684">
    <property type="entry name" value="DnaJ_CXXCXGXG"/>
    <property type="match status" value="1"/>
</dbReference>
<dbReference type="PRINTS" id="PR00625">
    <property type="entry name" value="JDOMAIN"/>
</dbReference>
<dbReference type="SMART" id="SM00271">
    <property type="entry name" value="DnaJ"/>
    <property type="match status" value="1"/>
</dbReference>
<dbReference type="SUPFAM" id="SSF46565">
    <property type="entry name" value="Chaperone J-domain"/>
    <property type="match status" value="1"/>
</dbReference>
<dbReference type="SUPFAM" id="SSF57938">
    <property type="entry name" value="DnaJ/Hsp40 cysteine-rich domain"/>
    <property type="match status" value="1"/>
</dbReference>
<dbReference type="SUPFAM" id="SSF49493">
    <property type="entry name" value="HSP40/DnaJ peptide-binding domain"/>
    <property type="match status" value="2"/>
</dbReference>
<dbReference type="PROSITE" id="PS00636">
    <property type="entry name" value="DNAJ_1"/>
    <property type="match status" value="1"/>
</dbReference>
<dbReference type="PROSITE" id="PS50076">
    <property type="entry name" value="DNAJ_2"/>
    <property type="match status" value="1"/>
</dbReference>
<dbReference type="PROSITE" id="PS51188">
    <property type="entry name" value="ZF_CR"/>
    <property type="match status" value="1"/>
</dbReference>
<sequence>MAKRDYYEVLGVAKNASDDEIKKAYRKLAMKHHPDRNPGNKDAEGHFKEVKEAYEMLSDSQKRAAYDQYGHAGVDPNMGGAGAQGFGGFADAFGDIFGDIFGQAAGGAARGGGGRAGPQVYRGADLRYSMEITLEQAAHGYDTQIRVPSWVSCEVCHGSGAKPGTKPETCPTCSGSGSVRMSQGFFSIQQTCPKCHGTGTYIPDPCGHCHGAGKVKETKTLEVKIPAGIDDGMRIRSAGNGEPGINGGPSGDLYVEIHIKQHSVFERDGDDLHCQMPIPFTTAALGGEIEVPTLAGRASFTVPEGTQSGKTFRLRGKGIKGLRSSIAGDLYVHVQVETPVKLTEPQRDLLKQFEKALVEGGSRHSPQSKSWFDRVKSFFD</sequence>
<organism>
    <name type="scientific">Paraburkholderia xenovorans (strain LB400)</name>
    <dbReference type="NCBI Taxonomy" id="266265"/>
    <lineage>
        <taxon>Bacteria</taxon>
        <taxon>Pseudomonadati</taxon>
        <taxon>Pseudomonadota</taxon>
        <taxon>Betaproteobacteria</taxon>
        <taxon>Burkholderiales</taxon>
        <taxon>Burkholderiaceae</taxon>
        <taxon>Paraburkholderia</taxon>
    </lineage>
</organism>
<name>DNAJ_PARXL</name>
<keyword id="KW-0143">Chaperone</keyword>
<keyword id="KW-0963">Cytoplasm</keyword>
<keyword id="KW-0235">DNA replication</keyword>
<keyword id="KW-0479">Metal-binding</keyword>
<keyword id="KW-1185">Reference proteome</keyword>
<keyword id="KW-0677">Repeat</keyword>
<keyword id="KW-0346">Stress response</keyword>
<keyword id="KW-0862">Zinc</keyword>
<keyword id="KW-0863">Zinc-finger</keyword>
<evidence type="ECO:0000255" key="1">
    <source>
        <dbReference type="HAMAP-Rule" id="MF_01152"/>
    </source>
</evidence>
<gene>
    <name evidence="1" type="primary">dnaJ</name>
    <name type="ordered locus">Bxeno_A0501</name>
    <name type="ORF">Bxe_A3960</name>
</gene>
<accession>Q145F0</accession>
<reference key="1">
    <citation type="journal article" date="2006" name="Proc. Natl. Acad. Sci. U.S.A.">
        <title>Burkholderia xenovorans LB400 harbors a multi-replicon, 9.73-Mbp genome shaped for versatility.</title>
        <authorList>
            <person name="Chain P.S.G."/>
            <person name="Denef V.J."/>
            <person name="Konstantinidis K.T."/>
            <person name="Vergez L.M."/>
            <person name="Agullo L."/>
            <person name="Reyes V.L."/>
            <person name="Hauser L."/>
            <person name="Cordova M."/>
            <person name="Gomez L."/>
            <person name="Gonzalez M."/>
            <person name="Land M."/>
            <person name="Lao V."/>
            <person name="Larimer F."/>
            <person name="LiPuma J.J."/>
            <person name="Mahenthiralingam E."/>
            <person name="Malfatti S.A."/>
            <person name="Marx C.J."/>
            <person name="Parnell J.J."/>
            <person name="Ramette A."/>
            <person name="Richardson P."/>
            <person name="Seeger M."/>
            <person name="Smith D."/>
            <person name="Spilker T."/>
            <person name="Sul W.J."/>
            <person name="Tsoi T.V."/>
            <person name="Ulrich L.E."/>
            <person name="Zhulin I.B."/>
            <person name="Tiedje J.M."/>
        </authorList>
    </citation>
    <scope>NUCLEOTIDE SEQUENCE [LARGE SCALE GENOMIC DNA]</scope>
    <source>
        <strain>LB400</strain>
    </source>
</reference>
<feature type="chain" id="PRO_1000085166" description="Chaperone protein DnaJ">
    <location>
        <begin position="1"/>
        <end position="380"/>
    </location>
</feature>
<feature type="domain" description="J" evidence="1">
    <location>
        <begin position="5"/>
        <end position="70"/>
    </location>
</feature>
<feature type="repeat" description="CXXCXGXG motif">
    <location>
        <begin position="153"/>
        <end position="160"/>
    </location>
</feature>
<feature type="repeat" description="CXXCXGXG motif">
    <location>
        <begin position="170"/>
        <end position="177"/>
    </location>
</feature>
<feature type="repeat" description="CXXCXGXG motif">
    <location>
        <begin position="192"/>
        <end position="199"/>
    </location>
</feature>
<feature type="repeat" description="CXXCXGXG motif">
    <location>
        <begin position="206"/>
        <end position="213"/>
    </location>
</feature>
<feature type="zinc finger region" description="CR-type" evidence="1">
    <location>
        <begin position="140"/>
        <end position="218"/>
    </location>
</feature>
<feature type="binding site" evidence="1">
    <location>
        <position position="153"/>
    </location>
    <ligand>
        <name>Zn(2+)</name>
        <dbReference type="ChEBI" id="CHEBI:29105"/>
        <label>1</label>
    </ligand>
</feature>
<feature type="binding site" evidence="1">
    <location>
        <position position="156"/>
    </location>
    <ligand>
        <name>Zn(2+)</name>
        <dbReference type="ChEBI" id="CHEBI:29105"/>
        <label>1</label>
    </ligand>
</feature>
<feature type="binding site" evidence="1">
    <location>
        <position position="170"/>
    </location>
    <ligand>
        <name>Zn(2+)</name>
        <dbReference type="ChEBI" id="CHEBI:29105"/>
        <label>2</label>
    </ligand>
</feature>
<feature type="binding site" evidence="1">
    <location>
        <position position="173"/>
    </location>
    <ligand>
        <name>Zn(2+)</name>
        <dbReference type="ChEBI" id="CHEBI:29105"/>
        <label>2</label>
    </ligand>
</feature>
<feature type="binding site" evidence="1">
    <location>
        <position position="192"/>
    </location>
    <ligand>
        <name>Zn(2+)</name>
        <dbReference type="ChEBI" id="CHEBI:29105"/>
        <label>2</label>
    </ligand>
</feature>
<feature type="binding site" evidence="1">
    <location>
        <position position="195"/>
    </location>
    <ligand>
        <name>Zn(2+)</name>
        <dbReference type="ChEBI" id="CHEBI:29105"/>
        <label>2</label>
    </ligand>
</feature>
<feature type="binding site" evidence="1">
    <location>
        <position position="206"/>
    </location>
    <ligand>
        <name>Zn(2+)</name>
        <dbReference type="ChEBI" id="CHEBI:29105"/>
        <label>1</label>
    </ligand>
</feature>
<feature type="binding site" evidence="1">
    <location>
        <position position="209"/>
    </location>
    <ligand>
        <name>Zn(2+)</name>
        <dbReference type="ChEBI" id="CHEBI:29105"/>
        <label>1</label>
    </ligand>
</feature>
<protein>
    <recommendedName>
        <fullName evidence="1">Chaperone protein DnaJ</fullName>
    </recommendedName>
</protein>
<proteinExistence type="inferred from homology"/>
<comment type="function">
    <text evidence="1">Participates actively in the response to hyperosmotic and heat shock by preventing the aggregation of stress-denatured proteins and by disaggregating proteins, also in an autonomous, DnaK-independent fashion. Unfolded proteins bind initially to DnaJ; upon interaction with the DnaJ-bound protein, DnaK hydrolyzes its bound ATP, resulting in the formation of a stable complex. GrpE releases ADP from DnaK; ATP binding to DnaK triggers the release of the substrate protein, thus completing the reaction cycle. Several rounds of ATP-dependent interactions between DnaJ, DnaK and GrpE are required for fully efficient folding. Also involved, together with DnaK and GrpE, in the DNA replication of plasmids through activation of initiation proteins.</text>
</comment>
<comment type="cofactor">
    <cofactor evidence="1">
        <name>Zn(2+)</name>
        <dbReference type="ChEBI" id="CHEBI:29105"/>
    </cofactor>
    <text evidence="1">Binds 2 Zn(2+) ions per monomer.</text>
</comment>
<comment type="subunit">
    <text evidence="1">Homodimer.</text>
</comment>
<comment type="subcellular location">
    <subcellularLocation>
        <location evidence="1">Cytoplasm</location>
    </subcellularLocation>
</comment>
<comment type="domain">
    <text evidence="1">The J domain is necessary and sufficient to stimulate DnaK ATPase activity. Zinc center 1 plays an important role in the autonomous, DnaK-independent chaperone activity of DnaJ. Zinc center 2 is essential for interaction with DnaK and for DnaJ activity.</text>
</comment>
<comment type="similarity">
    <text evidence="1">Belongs to the DnaJ family.</text>
</comment>